<sequence length="367" mass="40596">MKTRFPSPFFILYRRLTVAISFGKVLGWGCLGRILSWMFSCIASFRRKLFCSAPYRASSTVISVGNIVLGGSGKTPTVLWLAENLRARGYSCAVLSRGYKGKCSRQRKLIVVDPKMHSAAYVGDEPLLMAGKLQDGAVFVHKDRRVSAKHAAKNFDILILDDGFQNTKLHKDVEIVVVNGQDPLGGAEFFPRGRLRDFPNRLKEADFIIVNGSCCLENQKLLNTWSSSPKIFVEPCISQVLWEPSGEQLPLDSLSGLAAGVFCGLGFPQGFLDMLKRAGVKILGTYLLPDHAGITKKELHYFSSKIALRQGRGILCTEKDGVKLGNLVHEQGILPVGKVQMRFDFANHEDSGVSLLNRIDQIHNGKR</sequence>
<proteinExistence type="inferred from homology"/>
<keyword id="KW-0067">ATP-binding</keyword>
<keyword id="KW-0418">Kinase</keyword>
<keyword id="KW-0441">Lipid A biosynthesis</keyword>
<keyword id="KW-0444">Lipid biosynthesis</keyword>
<keyword id="KW-0443">Lipid metabolism</keyword>
<keyword id="KW-0547">Nucleotide-binding</keyword>
<keyword id="KW-0808">Transferase</keyword>
<name>LPXK_CHLCV</name>
<accession>Q824D6</accession>
<comment type="function">
    <text evidence="1">Transfers the gamma-phosphate of ATP to the 4'-position of a tetraacyldisaccharide 1-phosphate intermediate (termed DS-1-P) to form tetraacyldisaccharide 1,4'-bis-phosphate (lipid IVA).</text>
</comment>
<comment type="catalytic activity">
    <reaction evidence="1">
        <text>a lipid A disaccharide + ATP = a lipid IVA + ADP + H(+)</text>
        <dbReference type="Rhea" id="RHEA:67840"/>
        <dbReference type="ChEBI" id="CHEBI:15378"/>
        <dbReference type="ChEBI" id="CHEBI:30616"/>
        <dbReference type="ChEBI" id="CHEBI:176343"/>
        <dbReference type="ChEBI" id="CHEBI:176425"/>
        <dbReference type="ChEBI" id="CHEBI:456216"/>
        <dbReference type="EC" id="2.7.1.130"/>
    </reaction>
</comment>
<comment type="pathway">
    <text evidence="1">Glycolipid biosynthesis; lipid IV(A) biosynthesis; lipid IV(A) from (3R)-3-hydroxytetradecanoyl-[acyl-carrier-protein] and UDP-N-acetyl-alpha-D-glucosamine: step 6/6.</text>
</comment>
<comment type="similarity">
    <text evidence="1">Belongs to the LpxK family.</text>
</comment>
<reference key="1">
    <citation type="journal article" date="2003" name="Nucleic Acids Res.">
        <title>Genome sequence of Chlamydophila caviae (Chlamydia psittaci GPIC): examining the role of niche-specific genes in the evolution of the Chlamydiaceae.</title>
        <authorList>
            <person name="Read T.D."/>
            <person name="Myers G.S.A."/>
            <person name="Brunham R.C."/>
            <person name="Nelson W.C."/>
            <person name="Paulsen I.T."/>
            <person name="Heidelberg J.F."/>
            <person name="Holtzapple E.K."/>
            <person name="Khouri H.M."/>
            <person name="Federova N.B."/>
            <person name="Carty H.A."/>
            <person name="Umayam L.A."/>
            <person name="Haft D.H."/>
            <person name="Peterson J.D."/>
            <person name="Beanan M.J."/>
            <person name="White O."/>
            <person name="Salzberg S.L."/>
            <person name="Hsia R.-C."/>
            <person name="McClarty G."/>
            <person name="Rank R.G."/>
            <person name="Bavoil P.M."/>
            <person name="Fraser C.M."/>
        </authorList>
    </citation>
    <scope>NUCLEOTIDE SEQUENCE [LARGE SCALE GENOMIC DNA]</scope>
    <source>
        <strain>ATCC VR-813 / DSM 19441 / 03DC25 / GPIC</strain>
    </source>
</reference>
<evidence type="ECO:0000255" key="1">
    <source>
        <dbReference type="HAMAP-Rule" id="MF_00409"/>
    </source>
</evidence>
<feature type="chain" id="PRO_1000049892" description="Tetraacyldisaccharide 4'-kinase">
    <location>
        <begin position="1"/>
        <end position="367"/>
    </location>
</feature>
<feature type="binding site" evidence="1">
    <location>
        <begin position="68"/>
        <end position="75"/>
    </location>
    <ligand>
        <name>ATP</name>
        <dbReference type="ChEBI" id="CHEBI:30616"/>
    </ligand>
</feature>
<gene>
    <name evidence="1" type="primary">lpxK</name>
    <name type="ordered locus">CCA_00216</name>
</gene>
<dbReference type="EC" id="2.7.1.130" evidence="1"/>
<dbReference type="EMBL" id="AE015925">
    <property type="protein sequence ID" value="AAP04967.1"/>
    <property type="molecule type" value="Genomic_DNA"/>
</dbReference>
<dbReference type="RefSeq" id="WP_011006185.1">
    <property type="nucleotide sequence ID" value="NC_003361.3"/>
</dbReference>
<dbReference type="SMR" id="Q824D6"/>
<dbReference type="STRING" id="227941.CCA_00216"/>
<dbReference type="KEGG" id="cca:CCA_00216"/>
<dbReference type="eggNOG" id="COG1663">
    <property type="taxonomic scope" value="Bacteria"/>
</dbReference>
<dbReference type="HOGENOM" id="CLU_038816_6_0_0"/>
<dbReference type="OrthoDB" id="9789797at2"/>
<dbReference type="UniPathway" id="UPA00359">
    <property type="reaction ID" value="UER00482"/>
</dbReference>
<dbReference type="Proteomes" id="UP000002193">
    <property type="component" value="Chromosome"/>
</dbReference>
<dbReference type="GO" id="GO:0005886">
    <property type="term" value="C:plasma membrane"/>
    <property type="evidence" value="ECO:0007669"/>
    <property type="project" value="TreeGrafter"/>
</dbReference>
<dbReference type="GO" id="GO:0005524">
    <property type="term" value="F:ATP binding"/>
    <property type="evidence" value="ECO:0007669"/>
    <property type="project" value="UniProtKB-UniRule"/>
</dbReference>
<dbReference type="GO" id="GO:0009029">
    <property type="term" value="F:tetraacyldisaccharide 4'-kinase activity"/>
    <property type="evidence" value="ECO:0007669"/>
    <property type="project" value="UniProtKB-UniRule"/>
</dbReference>
<dbReference type="GO" id="GO:0009245">
    <property type="term" value="P:lipid A biosynthetic process"/>
    <property type="evidence" value="ECO:0007669"/>
    <property type="project" value="UniProtKB-UniRule"/>
</dbReference>
<dbReference type="GO" id="GO:0009244">
    <property type="term" value="P:lipopolysaccharide core region biosynthetic process"/>
    <property type="evidence" value="ECO:0007669"/>
    <property type="project" value="TreeGrafter"/>
</dbReference>
<dbReference type="CDD" id="cd01983">
    <property type="entry name" value="SIMIBI"/>
    <property type="match status" value="1"/>
</dbReference>
<dbReference type="HAMAP" id="MF_00409">
    <property type="entry name" value="LpxK"/>
    <property type="match status" value="1"/>
</dbReference>
<dbReference type="InterPro" id="IPR003758">
    <property type="entry name" value="LpxK"/>
</dbReference>
<dbReference type="InterPro" id="IPR027417">
    <property type="entry name" value="P-loop_NTPase"/>
</dbReference>
<dbReference type="NCBIfam" id="TIGR00682">
    <property type="entry name" value="lpxK"/>
    <property type="match status" value="1"/>
</dbReference>
<dbReference type="PANTHER" id="PTHR42724">
    <property type="entry name" value="TETRAACYLDISACCHARIDE 4'-KINASE"/>
    <property type="match status" value="1"/>
</dbReference>
<dbReference type="PANTHER" id="PTHR42724:SF1">
    <property type="entry name" value="TETRAACYLDISACCHARIDE 4'-KINASE, MITOCHONDRIAL-RELATED"/>
    <property type="match status" value="1"/>
</dbReference>
<dbReference type="Pfam" id="PF02606">
    <property type="entry name" value="LpxK"/>
    <property type="match status" value="1"/>
</dbReference>
<dbReference type="SUPFAM" id="SSF52540">
    <property type="entry name" value="P-loop containing nucleoside triphosphate hydrolases"/>
    <property type="match status" value="1"/>
</dbReference>
<protein>
    <recommendedName>
        <fullName evidence="1">Tetraacyldisaccharide 4'-kinase</fullName>
        <ecNumber evidence="1">2.7.1.130</ecNumber>
    </recommendedName>
    <alternativeName>
        <fullName evidence="1">Lipid A 4'-kinase</fullName>
    </alternativeName>
</protein>
<organism>
    <name type="scientific">Chlamydia caviae (strain ATCC VR-813 / DSM 19441 / 03DC25 / GPIC)</name>
    <name type="common">Chlamydophila caviae</name>
    <dbReference type="NCBI Taxonomy" id="227941"/>
    <lineage>
        <taxon>Bacteria</taxon>
        <taxon>Pseudomonadati</taxon>
        <taxon>Chlamydiota</taxon>
        <taxon>Chlamydiia</taxon>
        <taxon>Chlamydiales</taxon>
        <taxon>Chlamydiaceae</taxon>
        <taxon>Chlamydia/Chlamydophila group</taxon>
        <taxon>Chlamydia</taxon>
    </lineage>
</organism>